<dbReference type="EC" id="2.7.1.59" evidence="1"/>
<dbReference type="EMBL" id="AM286415">
    <property type="protein sequence ID" value="CAL11788.1"/>
    <property type="molecule type" value="Genomic_DNA"/>
</dbReference>
<dbReference type="RefSeq" id="WP_005170645.1">
    <property type="nucleotide sequence ID" value="NC_008800.1"/>
</dbReference>
<dbReference type="RefSeq" id="YP_001005999.1">
    <property type="nucleotide sequence ID" value="NC_008800.1"/>
</dbReference>
<dbReference type="SMR" id="A1JL75"/>
<dbReference type="KEGG" id="yen:YE1713"/>
<dbReference type="PATRIC" id="fig|393305.7.peg.1858"/>
<dbReference type="eggNOG" id="COG1940">
    <property type="taxonomic scope" value="Bacteria"/>
</dbReference>
<dbReference type="HOGENOM" id="CLU_036604_0_3_6"/>
<dbReference type="OrthoDB" id="9810372at2"/>
<dbReference type="UniPathway" id="UPA00544"/>
<dbReference type="Proteomes" id="UP000000642">
    <property type="component" value="Chromosome"/>
</dbReference>
<dbReference type="GO" id="GO:0005524">
    <property type="term" value="F:ATP binding"/>
    <property type="evidence" value="ECO:0007669"/>
    <property type="project" value="UniProtKB-UniRule"/>
</dbReference>
<dbReference type="GO" id="GO:0045127">
    <property type="term" value="F:N-acetylglucosamine kinase activity"/>
    <property type="evidence" value="ECO:0007669"/>
    <property type="project" value="UniProtKB-UniRule"/>
</dbReference>
<dbReference type="GO" id="GO:0008270">
    <property type="term" value="F:zinc ion binding"/>
    <property type="evidence" value="ECO:0007669"/>
    <property type="project" value="UniProtKB-UniRule"/>
</dbReference>
<dbReference type="GO" id="GO:0006044">
    <property type="term" value="P:N-acetylglucosamine metabolic process"/>
    <property type="evidence" value="ECO:0007669"/>
    <property type="project" value="UniProtKB-UniRule"/>
</dbReference>
<dbReference type="GO" id="GO:0009254">
    <property type="term" value="P:peptidoglycan turnover"/>
    <property type="evidence" value="ECO:0007669"/>
    <property type="project" value="UniProtKB-UniRule"/>
</dbReference>
<dbReference type="CDD" id="cd24057">
    <property type="entry name" value="ASKHA_NBD_ROK_NAGK"/>
    <property type="match status" value="1"/>
</dbReference>
<dbReference type="FunFam" id="3.30.420.40:FF:000049">
    <property type="entry name" value="N-acetyl-D-glucosamine kinase"/>
    <property type="match status" value="1"/>
</dbReference>
<dbReference type="FunFam" id="3.30.420.40:FF:000051">
    <property type="entry name" value="N-acetyl-D-glucosamine kinase"/>
    <property type="match status" value="1"/>
</dbReference>
<dbReference type="Gene3D" id="3.30.420.40">
    <property type="match status" value="2"/>
</dbReference>
<dbReference type="HAMAP" id="MF_01271">
    <property type="entry name" value="GlcNAc_kinase"/>
    <property type="match status" value="1"/>
</dbReference>
<dbReference type="InterPro" id="IPR043129">
    <property type="entry name" value="ATPase_NBD"/>
</dbReference>
<dbReference type="InterPro" id="IPR023505">
    <property type="entry name" value="N-acetyl-D-glucosamine_kinase"/>
</dbReference>
<dbReference type="InterPro" id="IPR000600">
    <property type="entry name" value="ROK"/>
</dbReference>
<dbReference type="InterPro" id="IPR049874">
    <property type="entry name" value="ROK_cs"/>
</dbReference>
<dbReference type="NCBIfam" id="NF009835">
    <property type="entry name" value="PRK13310.1"/>
    <property type="match status" value="1"/>
</dbReference>
<dbReference type="PANTHER" id="PTHR18964:SF162">
    <property type="entry name" value="N-ACETYL-D-GLUCOSAMINE KINASE"/>
    <property type="match status" value="1"/>
</dbReference>
<dbReference type="PANTHER" id="PTHR18964">
    <property type="entry name" value="ROK (REPRESSOR, ORF, KINASE) FAMILY"/>
    <property type="match status" value="1"/>
</dbReference>
<dbReference type="Pfam" id="PF00480">
    <property type="entry name" value="ROK"/>
    <property type="match status" value="1"/>
</dbReference>
<dbReference type="SUPFAM" id="SSF53067">
    <property type="entry name" value="Actin-like ATPase domain"/>
    <property type="match status" value="1"/>
</dbReference>
<dbReference type="PROSITE" id="PS01125">
    <property type="entry name" value="ROK"/>
    <property type="match status" value="1"/>
</dbReference>
<protein>
    <recommendedName>
        <fullName evidence="1">N-acetyl-D-glucosamine kinase</fullName>
        <ecNumber evidence="1">2.7.1.59</ecNumber>
    </recommendedName>
    <alternativeName>
        <fullName evidence="1">GlcNAc kinase</fullName>
    </alternativeName>
</protein>
<evidence type="ECO:0000255" key="1">
    <source>
        <dbReference type="HAMAP-Rule" id="MF_01271"/>
    </source>
</evidence>
<feature type="chain" id="PRO_0000301943" description="N-acetyl-D-glucosamine kinase">
    <location>
        <begin position="1"/>
        <end position="303"/>
    </location>
</feature>
<feature type="binding site" evidence="1">
    <location>
        <begin position="4"/>
        <end position="11"/>
    </location>
    <ligand>
        <name>ATP</name>
        <dbReference type="ChEBI" id="CHEBI:30616"/>
    </ligand>
</feature>
<feature type="binding site" evidence="1">
    <location>
        <begin position="133"/>
        <end position="140"/>
    </location>
    <ligand>
        <name>ATP</name>
        <dbReference type="ChEBI" id="CHEBI:30616"/>
    </ligand>
</feature>
<feature type="binding site" evidence="1">
    <location>
        <position position="157"/>
    </location>
    <ligand>
        <name>Zn(2+)</name>
        <dbReference type="ChEBI" id="CHEBI:29105"/>
    </ligand>
</feature>
<feature type="binding site" evidence="1">
    <location>
        <position position="177"/>
    </location>
    <ligand>
        <name>Zn(2+)</name>
        <dbReference type="ChEBI" id="CHEBI:29105"/>
    </ligand>
</feature>
<feature type="binding site" evidence="1">
    <location>
        <position position="179"/>
    </location>
    <ligand>
        <name>Zn(2+)</name>
        <dbReference type="ChEBI" id="CHEBI:29105"/>
    </ligand>
</feature>
<feature type="binding site" evidence="1">
    <location>
        <position position="184"/>
    </location>
    <ligand>
        <name>Zn(2+)</name>
        <dbReference type="ChEBI" id="CHEBI:29105"/>
    </ligand>
</feature>
<organism>
    <name type="scientific">Yersinia enterocolitica serotype O:8 / biotype 1B (strain NCTC 13174 / 8081)</name>
    <dbReference type="NCBI Taxonomy" id="393305"/>
    <lineage>
        <taxon>Bacteria</taxon>
        <taxon>Pseudomonadati</taxon>
        <taxon>Pseudomonadota</taxon>
        <taxon>Gammaproteobacteria</taxon>
        <taxon>Enterobacterales</taxon>
        <taxon>Yersiniaceae</taxon>
        <taxon>Yersinia</taxon>
    </lineage>
</organism>
<keyword id="KW-0067">ATP-binding</keyword>
<keyword id="KW-0119">Carbohydrate metabolism</keyword>
<keyword id="KW-0418">Kinase</keyword>
<keyword id="KW-0479">Metal-binding</keyword>
<keyword id="KW-0547">Nucleotide-binding</keyword>
<keyword id="KW-0808">Transferase</keyword>
<keyword id="KW-0862">Zinc</keyword>
<accession>A1JL75</accession>
<name>NAGK_YERE8</name>
<gene>
    <name evidence="1" type="primary">nagK</name>
    <name type="ordered locus">YE1713</name>
</gene>
<sequence>MYYGFDMGGTKIELGVFDANLQRIWHKRVPTPREDYSLLLQTLHDLTREADEFCGSKGSVGIGIPGLPNADDGTVFTANVPAAMGQSLQGDLSGLIGREVRIDNDANCFALSEAWDPEFRRYPTVLGLILGTGVGGGLIVNGNIVSGRNHITGEFGHFRLPVDALDILGADIPRVSCGCGHNGCIENYISGRGFEWMYKHFNQQSLPATEIIANYNLGESKAVAHVERFMDVLAVCLGNLLTMLDPHLVVIGGGLSNFEHIYQELPKRLPQHLLRVARLPRIEKARYGDAGGVRGAAFLHLSK</sequence>
<reference key="1">
    <citation type="journal article" date="2006" name="PLoS Genet.">
        <title>The complete genome sequence and comparative genome analysis of the high pathogenicity Yersinia enterocolitica strain 8081.</title>
        <authorList>
            <person name="Thomson N.R."/>
            <person name="Howard S."/>
            <person name="Wren B.W."/>
            <person name="Holden M.T.G."/>
            <person name="Crossman L."/>
            <person name="Challis G.L."/>
            <person name="Churcher C."/>
            <person name="Mungall K."/>
            <person name="Brooks K."/>
            <person name="Chillingworth T."/>
            <person name="Feltwell T."/>
            <person name="Abdellah Z."/>
            <person name="Hauser H."/>
            <person name="Jagels K."/>
            <person name="Maddison M."/>
            <person name="Moule S."/>
            <person name="Sanders M."/>
            <person name="Whitehead S."/>
            <person name="Quail M.A."/>
            <person name="Dougan G."/>
            <person name="Parkhill J."/>
            <person name="Prentice M.B."/>
        </authorList>
    </citation>
    <scope>NUCLEOTIDE SEQUENCE [LARGE SCALE GENOMIC DNA]</scope>
    <source>
        <strain>NCTC 13174 / 8081</strain>
    </source>
</reference>
<proteinExistence type="inferred from homology"/>
<comment type="function">
    <text evidence="1">Catalyzes the phosphorylation of N-acetyl-D-glucosamine (GlcNAc) derived from cell-wall degradation, yielding GlcNAc-6-P.</text>
</comment>
<comment type="catalytic activity">
    <reaction evidence="1">
        <text>N-acetyl-D-glucosamine + ATP = N-acetyl-D-glucosamine 6-phosphate + ADP + H(+)</text>
        <dbReference type="Rhea" id="RHEA:17417"/>
        <dbReference type="ChEBI" id="CHEBI:15378"/>
        <dbReference type="ChEBI" id="CHEBI:30616"/>
        <dbReference type="ChEBI" id="CHEBI:57513"/>
        <dbReference type="ChEBI" id="CHEBI:456216"/>
        <dbReference type="ChEBI" id="CHEBI:506227"/>
        <dbReference type="EC" id="2.7.1.59"/>
    </reaction>
</comment>
<comment type="pathway">
    <text evidence="1">Cell wall biogenesis; peptidoglycan recycling.</text>
</comment>
<comment type="similarity">
    <text evidence="1">Belongs to the ROK (NagC/XylR) family. NagK subfamily.</text>
</comment>